<comment type="function">
    <text evidence="1">Catalyzes the ATP-dependent phosphorylation of N-acetyl-L-glutamate.</text>
</comment>
<comment type="catalytic activity">
    <reaction evidence="1">
        <text>N-acetyl-L-glutamate + ATP = N-acetyl-L-glutamyl 5-phosphate + ADP</text>
        <dbReference type="Rhea" id="RHEA:14629"/>
        <dbReference type="ChEBI" id="CHEBI:30616"/>
        <dbReference type="ChEBI" id="CHEBI:44337"/>
        <dbReference type="ChEBI" id="CHEBI:57936"/>
        <dbReference type="ChEBI" id="CHEBI:456216"/>
        <dbReference type="EC" id="2.7.2.8"/>
    </reaction>
</comment>
<comment type="pathway">
    <text evidence="1">Amino-acid biosynthesis; L-arginine biosynthesis; N(2)-acetyl-L-ornithine from L-glutamate: step 2/4.</text>
</comment>
<comment type="subunit">
    <text evidence="1">Homodimer.</text>
</comment>
<comment type="subcellular location">
    <subcellularLocation>
        <location evidence="1">Cytoplasm</location>
    </subcellularLocation>
</comment>
<comment type="similarity">
    <text evidence="1">Belongs to the acetylglutamate kinase family. ArgB subfamily.</text>
</comment>
<proteinExistence type="inferred from homology"/>
<dbReference type="EC" id="2.7.2.8" evidence="1"/>
<dbReference type="EMBL" id="CP001158">
    <property type="protein sequence ID" value="ACL29876.1"/>
    <property type="molecule type" value="Genomic_DNA"/>
</dbReference>
<dbReference type="RefSeq" id="WP_012619410.1">
    <property type="nucleotide sequence ID" value="NC_011834.1"/>
</dbReference>
<dbReference type="SMR" id="B8D6W1"/>
<dbReference type="KEGG" id="bau:BUAPTUC7_049"/>
<dbReference type="HOGENOM" id="CLU_053680_1_1_6"/>
<dbReference type="UniPathway" id="UPA00068">
    <property type="reaction ID" value="UER00107"/>
</dbReference>
<dbReference type="GO" id="GO:0005737">
    <property type="term" value="C:cytoplasm"/>
    <property type="evidence" value="ECO:0007669"/>
    <property type="project" value="UniProtKB-SubCell"/>
</dbReference>
<dbReference type="GO" id="GO:0003991">
    <property type="term" value="F:acetylglutamate kinase activity"/>
    <property type="evidence" value="ECO:0007669"/>
    <property type="project" value="UniProtKB-UniRule"/>
</dbReference>
<dbReference type="GO" id="GO:0005524">
    <property type="term" value="F:ATP binding"/>
    <property type="evidence" value="ECO:0007669"/>
    <property type="project" value="UniProtKB-UniRule"/>
</dbReference>
<dbReference type="GO" id="GO:0042450">
    <property type="term" value="P:arginine biosynthetic process via ornithine"/>
    <property type="evidence" value="ECO:0007669"/>
    <property type="project" value="UniProtKB-UniRule"/>
</dbReference>
<dbReference type="GO" id="GO:0006526">
    <property type="term" value="P:L-arginine biosynthetic process"/>
    <property type="evidence" value="ECO:0007669"/>
    <property type="project" value="UniProtKB-UniPathway"/>
</dbReference>
<dbReference type="Gene3D" id="3.40.1160.10">
    <property type="entry name" value="Acetylglutamate kinase-like"/>
    <property type="match status" value="1"/>
</dbReference>
<dbReference type="HAMAP" id="MF_00082">
    <property type="entry name" value="ArgB"/>
    <property type="match status" value="1"/>
</dbReference>
<dbReference type="InterPro" id="IPR036393">
    <property type="entry name" value="AceGlu_kinase-like_sf"/>
</dbReference>
<dbReference type="InterPro" id="IPR004662">
    <property type="entry name" value="AcgluKinase_fam"/>
</dbReference>
<dbReference type="InterPro" id="IPR037528">
    <property type="entry name" value="ArgB"/>
</dbReference>
<dbReference type="InterPro" id="IPR001048">
    <property type="entry name" value="Asp/Glu/Uridylate_kinase"/>
</dbReference>
<dbReference type="NCBIfam" id="TIGR00761">
    <property type="entry name" value="argB"/>
    <property type="match status" value="1"/>
</dbReference>
<dbReference type="PANTHER" id="PTHR23342">
    <property type="entry name" value="N-ACETYLGLUTAMATE SYNTHASE"/>
    <property type="match status" value="1"/>
</dbReference>
<dbReference type="PANTHER" id="PTHR23342:SF0">
    <property type="entry name" value="N-ACETYLGLUTAMATE SYNTHASE, MITOCHONDRIAL"/>
    <property type="match status" value="1"/>
</dbReference>
<dbReference type="Pfam" id="PF00696">
    <property type="entry name" value="AA_kinase"/>
    <property type="match status" value="1"/>
</dbReference>
<dbReference type="PIRSF" id="PIRSF000728">
    <property type="entry name" value="NAGK"/>
    <property type="match status" value="1"/>
</dbReference>
<dbReference type="SUPFAM" id="SSF53633">
    <property type="entry name" value="Carbamate kinase-like"/>
    <property type="match status" value="1"/>
</dbReference>
<protein>
    <recommendedName>
        <fullName evidence="1">Acetylglutamate kinase</fullName>
        <ecNumber evidence="1">2.7.2.8</ecNumber>
    </recommendedName>
    <alternativeName>
        <fullName evidence="1">N-acetyl-L-glutamate 5-phosphotransferase</fullName>
    </alternativeName>
    <alternativeName>
        <fullName evidence="1">NAG kinase</fullName>
        <shortName evidence="1">NAGK</shortName>
    </alternativeName>
</protein>
<evidence type="ECO:0000255" key="1">
    <source>
        <dbReference type="HAMAP-Rule" id="MF_00082"/>
    </source>
</evidence>
<reference key="1">
    <citation type="journal article" date="2009" name="Science">
        <title>The dynamics and time scale of ongoing genomic erosion in symbiotic bacteria.</title>
        <authorList>
            <person name="Moran N.A."/>
            <person name="McLaughlin H.J."/>
            <person name="Sorek R."/>
        </authorList>
    </citation>
    <scope>NUCLEOTIDE SEQUENCE [LARGE SCALE GENOMIC DNA]</scope>
    <source>
        <strain>Tuc7</strain>
    </source>
</reference>
<feature type="chain" id="PRO_1000118344" description="Acetylglutamate kinase">
    <location>
        <begin position="1"/>
        <end position="257"/>
    </location>
</feature>
<feature type="binding site" evidence="1">
    <location>
        <begin position="43"/>
        <end position="44"/>
    </location>
    <ligand>
        <name>substrate</name>
    </ligand>
</feature>
<feature type="binding site" evidence="1">
    <location>
        <position position="65"/>
    </location>
    <ligand>
        <name>substrate</name>
    </ligand>
</feature>
<feature type="binding site" evidence="1">
    <location>
        <position position="157"/>
    </location>
    <ligand>
        <name>substrate</name>
    </ligand>
</feature>
<feature type="binding site" evidence="1">
    <location>
        <begin position="180"/>
        <end position="185"/>
    </location>
    <ligand>
        <name>ATP</name>
        <dbReference type="ChEBI" id="CHEBI:30616"/>
    </ligand>
</feature>
<feature type="binding site" evidence="1">
    <location>
        <begin position="208"/>
        <end position="210"/>
    </location>
    <ligand>
        <name>ATP</name>
        <dbReference type="ChEBI" id="CHEBI:30616"/>
    </ligand>
</feature>
<feature type="site" description="Transition state stabilizer" evidence="1">
    <location>
        <position position="7"/>
    </location>
</feature>
<feature type="site" description="Transition state stabilizer" evidence="1">
    <location>
        <position position="216"/>
    </location>
</feature>
<organism>
    <name type="scientific">Buchnera aphidicola subsp. Acyrthosiphon pisum (strain Tuc7)</name>
    <dbReference type="NCBI Taxonomy" id="561501"/>
    <lineage>
        <taxon>Bacteria</taxon>
        <taxon>Pseudomonadati</taxon>
        <taxon>Pseudomonadota</taxon>
        <taxon>Gammaproteobacteria</taxon>
        <taxon>Enterobacterales</taxon>
        <taxon>Erwiniaceae</taxon>
        <taxon>Buchnera</taxon>
    </lineage>
</organism>
<sequence>MNPLVIKLGGVLLESDDAMKRLFEALVDYQKFYKRHVSVIHGGGRLIDNLMNKLSLPVKKKNGLRITPSEHINIITGALAGTANKTLLAWALKYNINAIGLCLADGGSIDVERLDENLGHVGKAIPGSPLFLKKLFKEGAIPIISSIGITKDGLLMNVNADLAATALATTLQANLILLSDISSILDGKGQRITEIDSIQAEKLIMQGIITNGMIVKVRAALEAARVLRRPVDIASWQNTEKLKLLFNGVNIGTRVYV</sequence>
<gene>
    <name evidence="1" type="primary">argB</name>
    <name type="ordered locus">BUAPTUC7_049</name>
</gene>
<name>ARGB_BUCAT</name>
<keyword id="KW-0028">Amino-acid biosynthesis</keyword>
<keyword id="KW-0055">Arginine biosynthesis</keyword>
<keyword id="KW-0067">ATP-binding</keyword>
<keyword id="KW-0963">Cytoplasm</keyword>
<keyword id="KW-0418">Kinase</keyword>
<keyword id="KW-0547">Nucleotide-binding</keyword>
<keyword id="KW-0808">Transferase</keyword>
<accession>B8D6W1</accession>